<evidence type="ECO:0000255" key="1">
    <source>
        <dbReference type="HAMAP-Rule" id="MF_02012"/>
    </source>
</evidence>
<protein>
    <recommendedName>
        <fullName evidence="1">Cell division protein ZapA</fullName>
    </recommendedName>
    <alternativeName>
        <fullName evidence="1">Z ring-associated protein ZapA</fullName>
    </alternativeName>
</protein>
<accession>A1JPP1</accession>
<name>ZAPA_YERE8</name>
<sequence length="109" mass="12655">MSAQPVDIQIFGRSLRVNCPPEQQDALNMAAEDLNQRLQDLKVRTRVTNTEQLVFIAALNVCHELAQERLKTRDYASNMEQRIRMLQQTIEQALLEQGRISERQDAQFE</sequence>
<reference key="1">
    <citation type="journal article" date="2006" name="PLoS Genet.">
        <title>The complete genome sequence and comparative genome analysis of the high pathogenicity Yersinia enterocolitica strain 8081.</title>
        <authorList>
            <person name="Thomson N.R."/>
            <person name="Howard S."/>
            <person name="Wren B.W."/>
            <person name="Holden M.T.G."/>
            <person name="Crossman L."/>
            <person name="Challis G.L."/>
            <person name="Churcher C."/>
            <person name="Mungall K."/>
            <person name="Brooks K."/>
            <person name="Chillingworth T."/>
            <person name="Feltwell T."/>
            <person name="Abdellah Z."/>
            <person name="Hauser H."/>
            <person name="Jagels K."/>
            <person name="Maddison M."/>
            <person name="Moule S."/>
            <person name="Sanders M."/>
            <person name="Whitehead S."/>
            <person name="Quail M.A."/>
            <person name="Dougan G."/>
            <person name="Parkhill J."/>
            <person name="Prentice M.B."/>
        </authorList>
    </citation>
    <scope>NUCLEOTIDE SEQUENCE [LARGE SCALE GENOMIC DNA]</scope>
    <source>
        <strain>NCTC 13174 / 8081</strain>
    </source>
</reference>
<keyword id="KW-0131">Cell cycle</keyword>
<keyword id="KW-0132">Cell division</keyword>
<keyword id="KW-0175">Coiled coil</keyword>
<keyword id="KW-0963">Cytoplasm</keyword>
<keyword id="KW-0717">Septation</keyword>
<proteinExistence type="inferred from homology"/>
<gene>
    <name evidence="1" type="primary">zapA</name>
    <name type="ordered locus">YE3398</name>
</gene>
<comment type="function">
    <text evidence="1">Activator of cell division through the inhibition of FtsZ GTPase activity, therefore promoting FtsZ assembly into bundles of protofilaments necessary for the formation of the division Z ring. It is recruited early at mid-cell but it is not essential for cell division.</text>
</comment>
<comment type="subunit">
    <text evidence="1">Homodimer. Interacts with FtsZ.</text>
</comment>
<comment type="subcellular location">
    <subcellularLocation>
        <location evidence="1">Cytoplasm</location>
    </subcellularLocation>
    <text evidence="1">Localizes at mid-cell.</text>
</comment>
<comment type="similarity">
    <text evidence="1">Belongs to the ZapA family. Type 1 subfamily.</text>
</comment>
<dbReference type="EMBL" id="AM286415">
    <property type="protein sequence ID" value="CAL13424.1"/>
    <property type="molecule type" value="Genomic_DNA"/>
</dbReference>
<dbReference type="RefSeq" id="WP_004706812.1">
    <property type="nucleotide sequence ID" value="NC_008800.1"/>
</dbReference>
<dbReference type="RefSeq" id="YP_001007567.1">
    <property type="nucleotide sequence ID" value="NC_008800.1"/>
</dbReference>
<dbReference type="SMR" id="A1JPP1"/>
<dbReference type="GeneID" id="97454789"/>
<dbReference type="KEGG" id="yen:YE3398"/>
<dbReference type="PATRIC" id="fig|393305.7.peg.3610"/>
<dbReference type="eggNOG" id="COG3027">
    <property type="taxonomic scope" value="Bacteria"/>
</dbReference>
<dbReference type="HOGENOM" id="CLU_116623_3_0_6"/>
<dbReference type="OrthoDB" id="5917174at2"/>
<dbReference type="PRO" id="PR:A1JPP1"/>
<dbReference type="Proteomes" id="UP000000642">
    <property type="component" value="Chromosome"/>
</dbReference>
<dbReference type="GO" id="GO:0032153">
    <property type="term" value="C:cell division site"/>
    <property type="evidence" value="ECO:0007669"/>
    <property type="project" value="TreeGrafter"/>
</dbReference>
<dbReference type="GO" id="GO:0030428">
    <property type="term" value="C:cell septum"/>
    <property type="evidence" value="ECO:0007669"/>
    <property type="project" value="TreeGrafter"/>
</dbReference>
<dbReference type="GO" id="GO:0005829">
    <property type="term" value="C:cytosol"/>
    <property type="evidence" value="ECO:0007669"/>
    <property type="project" value="TreeGrafter"/>
</dbReference>
<dbReference type="GO" id="GO:0005886">
    <property type="term" value="C:plasma membrane"/>
    <property type="evidence" value="ECO:0007669"/>
    <property type="project" value="UniProtKB-UniRule"/>
</dbReference>
<dbReference type="GO" id="GO:0000917">
    <property type="term" value="P:division septum assembly"/>
    <property type="evidence" value="ECO:0007669"/>
    <property type="project" value="UniProtKB-KW"/>
</dbReference>
<dbReference type="GO" id="GO:0043093">
    <property type="term" value="P:FtsZ-dependent cytokinesis"/>
    <property type="evidence" value="ECO:0007669"/>
    <property type="project" value="TreeGrafter"/>
</dbReference>
<dbReference type="GO" id="GO:0000921">
    <property type="term" value="P:septin ring assembly"/>
    <property type="evidence" value="ECO:0007669"/>
    <property type="project" value="TreeGrafter"/>
</dbReference>
<dbReference type="FunFam" id="1.20.5.50:FF:000001">
    <property type="entry name" value="Cell division protein ZapA"/>
    <property type="match status" value="1"/>
</dbReference>
<dbReference type="FunFam" id="3.30.160.880:FF:000001">
    <property type="entry name" value="Cell division protein ZapA"/>
    <property type="match status" value="1"/>
</dbReference>
<dbReference type="Gene3D" id="1.20.5.50">
    <property type="match status" value="1"/>
</dbReference>
<dbReference type="Gene3D" id="3.30.160.880">
    <property type="entry name" value="Cell division protein ZapA protomer, N-terminal domain"/>
    <property type="match status" value="1"/>
</dbReference>
<dbReference type="HAMAP" id="MF_02012">
    <property type="entry name" value="ZapA_type1"/>
    <property type="match status" value="1"/>
</dbReference>
<dbReference type="InterPro" id="IPR007838">
    <property type="entry name" value="Cell_div_ZapA-like"/>
</dbReference>
<dbReference type="InterPro" id="IPR036192">
    <property type="entry name" value="Cell_div_ZapA-like_sf"/>
</dbReference>
<dbReference type="InterPro" id="IPR023771">
    <property type="entry name" value="Cell_div_ZapA_eubact"/>
</dbReference>
<dbReference type="InterPro" id="IPR042233">
    <property type="entry name" value="Cell_div_ZapA_N"/>
</dbReference>
<dbReference type="NCBIfam" id="NF008209">
    <property type="entry name" value="PRK10972.1"/>
    <property type="match status" value="1"/>
</dbReference>
<dbReference type="PANTHER" id="PTHR34981">
    <property type="entry name" value="CELL DIVISION PROTEIN ZAPA"/>
    <property type="match status" value="1"/>
</dbReference>
<dbReference type="PANTHER" id="PTHR34981:SF1">
    <property type="entry name" value="CELL DIVISION PROTEIN ZAPA"/>
    <property type="match status" value="1"/>
</dbReference>
<dbReference type="Pfam" id="PF05164">
    <property type="entry name" value="ZapA"/>
    <property type="match status" value="1"/>
</dbReference>
<dbReference type="SUPFAM" id="SSF102829">
    <property type="entry name" value="Cell division protein ZapA-like"/>
    <property type="match status" value="1"/>
</dbReference>
<organism>
    <name type="scientific">Yersinia enterocolitica serotype O:8 / biotype 1B (strain NCTC 13174 / 8081)</name>
    <dbReference type="NCBI Taxonomy" id="393305"/>
    <lineage>
        <taxon>Bacteria</taxon>
        <taxon>Pseudomonadati</taxon>
        <taxon>Pseudomonadota</taxon>
        <taxon>Gammaproteobacteria</taxon>
        <taxon>Enterobacterales</taxon>
        <taxon>Yersiniaceae</taxon>
        <taxon>Yersinia</taxon>
    </lineage>
</organism>
<feature type="chain" id="PRO_0000345665" description="Cell division protein ZapA">
    <location>
        <begin position="1"/>
        <end position="109"/>
    </location>
</feature>
<feature type="coiled-coil region" evidence="1">
    <location>
        <begin position="22"/>
        <end position="99"/>
    </location>
</feature>